<sequence length="437" mass="49006">MDNEVEKNIEIWKVKKLVQSLEKARGNGTSMISLVIPPKGQIPLYQKMLTDEYGTASNIKSRVNRLSVLSAITSTQQKLKLYNTLPKNGLVLYCGDIITEDGKEKKVTFDIEPYKPINTSLYLCDNKFHTEVLSELLQADDKFGFIVMDGQGTLFGSVSGNTRTVLHKFTVDLPKKHGRGGQSALRFARLREEKRHNYVRKVAEVAVQNFITNDKVNVKGLILAGSADFKTDLAKSELFDPRLACKVISIVDVSYGGENGFNQAIELSAEALANVKYVQEKKLLEAYFDEISQDTGKFCYGIDDTLKALDLGAVEKLIVFENLETIRYTFKDAEDNEVIKFAEPEAKDKSFAIDKATGQEMDVVSEEPLIEWLAANYKNFGATLEFITDKSSEGAQFVTGFGGIGAMLRYKVNFEQLVDESEDEYYDEDEGSDYDFI</sequence>
<proteinExistence type="evidence at protein level"/>
<reference key="1">
    <citation type="journal article" date="1986" name="Nucleic Acids Res.">
        <title>Yeast omnipotent suppressor SUP1 (SUP45): nucleotide sequence of the wildtype and a mutant gene.</title>
        <authorList>
            <person name="Breining P."/>
            <person name="Piepersberg W."/>
        </authorList>
    </citation>
    <scope>NUCLEOTIDE SEQUENCE [GENOMIC DNA]</scope>
    <source>
        <strain>ATCC 204508 / S288c</strain>
    </source>
</reference>
<reference key="2">
    <citation type="journal article" date="1987" name="Mol. Biol. (Mosk.)">
        <title>Nucleotide sequence of mutant and wild-type alelles of the SUP1 gene and comparison of transcripts of SUP1 and SUP2 genes.</title>
        <authorList>
            <person name="Surguchev A.P."/>
            <person name="Telkov M.V."/>
            <person name="Smirnov V.N."/>
            <person name="Breining P."/>
            <person name="Piepersberg W."/>
        </authorList>
    </citation>
    <scope>NUCLEOTIDE SEQUENCE [GENOMIC DNA]</scope>
</reference>
<reference key="3">
    <citation type="journal article" date="1994" name="EMBO J.">
        <title>Complete DNA sequence of yeast chromosome II.</title>
        <authorList>
            <person name="Feldmann H."/>
            <person name="Aigle M."/>
            <person name="Aljinovic G."/>
            <person name="Andre B."/>
            <person name="Baclet M.C."/>
            <person name="Barthe C."/>
            <person name="Baur A."/>
            <person name="Becam A.-M."/>
            <person name="Biteau N."/>
            <person name="Boles E."/>
            <person name="Brandt T."/>
            <person name="Brendel M."/>
            <person name="Brueckner M."/>
            <person name="Bussereau F."/>
            <person name="Christiansen C."/>
            <person name="Contreras R."/>
            <person name="Crouzet M."/>
            <person name="Cziepluch C."/>
            <person name="Demolis N."/>
            <person name="Delaveau T."/>
            <person name="Doignon F."/>
            <person name="Domdey H."/>
            <person name="Duesterhus S."/>
            <person name="Dubois E."/>
            <person name="Dujon B."/>
            <person name="El Bakkoury M."/>
            <person name="Entian K.-D."/>
            <person name="Feuermann M."/>
            <person name="Fiers W."/>
            <person name="Fobo G.M."/>
            <person name="Fritz C."/>
            <person name="Gassenhuber J."/>
            <person name="Glansdorff N."/>
            <person name="Goffeau A."/>
            <person name="Grivell L.A."/>
            <person name="de Haan M."/>
            <person name="Hein C."/>
            <person name="Herbert C.J."/>
            <person name="Hollenberg C.P."/>
            <person name="Holmstroem K."/>
            <person name="Jacq C."/>
            <person name="Jacquet M."/>
            <person name="Jauniaux J.-C."/>
            <person name="Jonniaux J.-L."/>
            <person name="Kallesoee T."/>
            <person name="Kiesau P."/>
            <person name="Kirchrath L."/>
            <person name="Koetter P."/>
            <person name="Korol S."/>
            <person name="Liebl S."/>
            <person name="Logghe M."/>
            <person name="Lohan A.J.E."/>
            <person name="Louis E.J."/>
            <person name="Li Z.Y."/>
            <person name="Maat M.J."/>
            <person name="Mallet L."/>
            <person name="Mannhaupt G."/>
            <person name="Messenguy F."/>
            <person name="Miosga T."/>
            <person name="Molemans F."/>
            <person name="Mueller S."/>
            <person name="Nasr F."/>
            <person name="Obermaier B."/>
            <person name="Perea J."/>
            <person name="Pierard A."/>
            <person name="Piravandi E."/>
            <person name="Pohl F.M."/>
            <person name="Pohl T.M."/>
            <person name="Potier S."/>
            <person name="Proft M."/>
            <person name="Purnelle B."/>
            <person name="Ramezani Rad M."/>
            <person name="Rieger M."/>
            <person name="Rose M."/>
            <person name="Schaaff-Gerstenschlaeger I."/>
            <person name="Scherens B."/>
            <person name="Schwarzlose C."/>
            <person name="Skala J."/>
            <person name="Slonimski P.P."/>
            <person name="Smits P.H.M."/>
            <person name="Souciet J.-L."/>
            <person name="Steensma H.Y."/>
            <person name="Stucka R."/>
            <person name="Urrestarazu L.A."/>
            <person name="van der Aart Q.J.M."/>
            <person name="Van Dyck L."/>
            <person name="Vassarotti A."/>
            <person name="Vetter I."/>
            <person name="Vierendeels F."/>
            <person name="Vissers S."/>
            <person name="Wagner G."/>
            <person name="de Wergifosse P."/>
            <person name="Wolfe K.H."/>
            <person name="Zagulski M."/>
            <person name="Zimmermann F.K."/>
            <person name="Mewes H.-W."/>
            <person name="Kleine K."/>
        </authorList>
    </citation>
    <scope>NUCLEOTIDE SEQUENCE [LARGE SCALE GENOMIC DNA]</scope>
    <source>
        <strain>ATCC 204508 / S288c</strain>
    </source>
</reference>
<reference key="4">
    <citation type="journal article" date="2014" name="G3 (Bethesda)">
        <title>The reference genome sequence of Saccharomyces cerevisiae: Then and now.</title>
        <authorList>
            <person name="Engel S.R."/>
            <person name="Dietrich F.S."/>
            <person name="Fisk D.G."/>
            <person name="Binkley G."/>
            <person name="Balakrishnan R."/>
            <person name="Costanzo M.C."/>
            <person name="Dwight S.S."/>
            <person name="Hitz B.C."/>
            <person name="Karra K."/>
            <person name="Nash R.S."/>
            <person name="Weng S."/>
            <person name="Wong E.D."/>
            <person name="Lloyd P."/>
            <person name="Skrzypek M.S."/>
            <person name="Miyasato S.R."/>
            <person name="Simison M."/>
            <person name="Cherry J.M."/>
        </authorList>
    </citation>
    <scope>GENOME REANNOTATION</scope>
    <source>
        <strain>ATCC 204508 / S288c</strain>
    </source>
</reference>
<reference key="5">
    <citation type="journal article" date="1993" name="Yeast">
        <title>Sequence and function analysis of a 2.73 kb fragment of Saccharomyces cerevisiae chromosome II.</title>
        <authorList>
            <person name="Miosga T."/>
            <person name="Zimmermann F.K."/>
        </authorList>
    </citation>
    <scope>NUCLEOTIDE SEQUENCE [GENOMIC DNA] OF 1-432</scope>
    <source>
        <strain>ATCC 200060 / W303</strain>
    </source>
</reference>
<reference key="6">
    <citation type="journal article" date="1995" name="EMBO J.">
        <title>The products of the SUP45 (eRF1) and SUP35 genes interact to mediate translation termination in Saccharomyces cerevisiae.</title>
        <authorList>
            <person name="Stansfield I."/>
            <person name="Jones K.M."/>
            <person name="Kushnirov V.V."/>
            <person name="Dagkesamanskaya A.R."/>
            <person name="Poznyakovski A.I."/>
            <person name="Paushkin S.V."/>
            <person name="Nierras C.R."/>
            <person name="Cox B.S."/>
            <person name="Ter-Avanesyan M.D."/>
            <person name="Tuite M.F."/>
        </authorList>
    </citation>
    <scope>FUNCTION</scope>
</reference>
<reference key="7">
    <citation type="journal article" date="2003" name="Nature">
        <title>Global analysis of protein localization in budding yeast.</title>
        <authorList>
            <person name="Huh W.-K."/>
            <person name="Falvo J.V."/>
            <person name="Gerke L.C."/>
            <person name="Carroll A.S."/>
            <person name="Howson R.W."/>
            <person name="Weissman J.S."/>
            <person name="O'Shea E.K."/>
        </authorList>
    </citation>
    <scope>SUBCELLULAR LOCATION [LARGE SCALE ANALYSIS]</scope>
</reference>
<reference key="8">
    <citation type="journal article" date="2003" name="Nature">
        <title>Global analysis of protein expression in yeast.</title>
        <authorList>
            <person name="Ghaemmaghami S."/>
            <person name="Huh W.-K."/>
            <person name="Bower K."/>
            <person name="Howson R.W."/>
            <person name="Belle A."/>
            <person name="Dephoure N."/>
            <person name="O'Shea E.K."/>
            <person name="Weissman J.S."/>
        </authorList>
    </citation>
    <scope>LEVEL OF PROTEIN EXPRESSION [LARGE SCALE ANALYSIS]</scope>
</reference>
<reference key="9">
    <citation type="journal article" date="2005" name="J. Biol. Chem.">
        <title>The glutamine residue of the conserved GGQ motif in Saccharomyces cerevisiae release factor eRF1 is methylated by the product of the YDR140w gene.</title>
        <authorList>
            <person name="Heurgue-Hamard V."/>
            <person name="Champ S."/>
            <person name="Mora L."/>
            <person name="Merkulova-Rainon T."/>
            <person name="Kisselev L.L."/>
            <person name="Buckingham R.H."/>
        </authorList>
    </citation>
    <scope>METHYLATION AT GLN-182</scope>
    <scope>IDENTIFICATION BY MASS SPECTROMETRY</scope>
</reference>
<reference key="10">
    <citation type="journal article" date="2006" name="Mol. Cell. Biol.">
        <title>Tpa1p is part of an mRNP complex that influences translation termination, mRNA deadenylation, and mRNA turnover in Saccharomyces cerevisiae.</title>
        <authorList>
            <person name="Keeling K.M."/>
            <person name="Salas-Marco J."/>
            <person name="Osherovich L.Z."/>
            <person name="Bedwell D.M."/>
        </authorList>
    </citation>
    <scope>INTERACTION WITH TPA1</scope>
</reference>
<reference key="11">
    <citation type="journal article" date="2006" name="J. Biol. Chem.">
        <title>The yeast translation release factors Mrf1p and Sup45p (eRF1) are methylated, respectively, by the methyltransferases Mtq1p and Mtq2p.</title>
        <authorList>
            <person name="Polevoda B."/>
            <person name="Span L."/>
            <person name="Sherman F."/>
        </authorList>
    </citation>
    <scope>METHYLATION AT GLN-182</scope>
    <scope>IDENTIFICATION BY MASS SPECTROMETRY</scope>
</reference>
<reference key="12">
    <citation type="journal article" date="2009" name="Science">
        <title>Global analysis of Cdk1 substrate phosphorylation sites provides insights into evolution.</title>
        <authorList>
            <person name="Holt L.J."/>
            <person name="Tuch B.B."/>
            <person name="Villen J."/>
            <person name="Johnson A.D."/>
            <person name="Gygi S.P."/>
            <person name="Morgan D.O."/>
        </authorList>
    </citation>
    <scope>PHOSPHORYLATION [LARGE SCALE ANALYSIS] AT SER-421</scope>
    <scope>IDENTIFICATION BY MASS SPECTROMETRY [LARGE SCALE ANALYSIS]</scope>
</reference>
<reference key="13">
    <citation type="journal article" date="2010" name="Science">
        <title>Dom34:Hbs1 promotes subunit dissociation and peptidyl-tRNA drop-off to initiate no-go decay.</title>
        <authorList>
            <person name="Shoemaker C.J."/>
            <person name="Eyler D.E."/>
            <person name="Green R."/>
        </authorList>
    </citation>
    <scope>FUNCTION</scope>
</reference>
<reference key="14">
    <citation type="journal article" date="2012" name="Proteomics">
        <title>Sites of ubiquitin attachment in Saccharomyces cerevisiae.</title>
        <authorList>
            <person name="Starita L.M."/>
            <person name="Lo R.S."/>
            <person name="Eng J.K."/>
            <person name="von Haller P.D."/>
            <person name="Fields S."/>
        </authorList>
    </citation>
    <scope>UBIQUITINATION [LARGE SCALE ANALYSIS] AT LYS-331</scope>
    <scope>IDENTIFICATION BY MASS SPECTROMETRY [LARGE SCALE ANALYSIS]</scope>
</reference>
<reference key="15">
    <citation type="journal article" date="2021" name="Science">
        <title>Mechanisms that ensure speed and fidelity in eukaryotic translation termination.</title>
        <authorList>
            <person name="Lawson M.R."/>
            <person name="Lessen L.N."/>
            <person name="Wang J."/>
            <person name="Prabhakar A."/>
            <person name="Corsepius N.C."/>
            <person name="Green R."/>
            <person name="Puglisi J.D."/>
        </authorList>
    </citation>
    <scope>FUNCTION</scope>
    <scope>CATALYTIC ACTIVITY</scope>
    <scope>MUTAGENESIS OF GLY-180</scope>
</reference>
<organism>
    <name type="scientific">Saccharomyces cerevisiae (strain ATCC 204508 / S288c)</name>
    <name type="common">Baker's yeast</name>
    <dbReference type="NCBI Taxonomy" id="559292"/>
    <lineage>
        <taxon>Eukaryota</taxon>
        <taxon>Fungi</taxon>
        <taxon>Dikarya</taxon>
        <taxon>Ascomycota</taxon>
        <taxon>Saccharomycotina</taxon>
        <taxon>Saccharomycetes</taxon>
        <taxon>Saccharomycetales</taxon>
        <taxon>Saccharomycetaceae</taxon>
        <taxon>Saccharomyces</taxon>
    </lineage>
</organism>
<evidence type="ECO:0000269" key="1">
    <source>
    </source>
</evidence>
<evidence type="ECO:0000269" key="2">
    <source>
    </source>
</evidence>
<evidence type="ECO:0000269" key="3">
    <source>
    </source>
</evidence>
<evidence type="ECO:0000269" key="4">
    <source>
    </source>
</evidence>
<evidence type="ECO:0000269" key="5">
    <source>
    </source>
</evidence>
<evidence type="ECO:0000269" key="6">
    <source>
    </source>
</evidence>
<evidence type="ECO:0000269" key="7">
    <source>
    </source>
</evidence>
<evidence type="ECO:0000269" key="8">
    <source>
    </source>
</evidence>
<evidence type="ECO:0000305" key="9"/>
<evidence type="ECO:0007744" key="10">
    <source>
    </source>
</evidence>
<evidence type="ECO:0007744" key="11">
    <source>
    </source>
</evidence>
<gene>
    <name type="primary">SUP45</name>
    <name type="synonym">SAL4</name>
    <name type="synonym">SUP1</name>
    <name type="ordered locus">YBR143C</name>
    <name type="ORF">YBR1120</name>
</gene>
<feature type="chain" id="PRO_0000143167" description="Eukaryotic peptide chain release factor subunit 1">
    <location>
        <begin position="1"/>
        <end position="437"/>
    </location>
</feature>
<feature type="modified residue" description="N5-methylglutamine" evidence="3 4">
    <location>
        <position position="182"/>
    </location>
</feature>
<feature type="modified residue" description="Phosphoserine" evidence="10">
    <location>
        <position position="421"/>
    </location>
</feature>
<feature type="cross-link" description="Glycyl lysine isopeptide (Lys-Gly) (interchain with G-Cter in ubiquitin)" evidence="11">
    <location>
        <position position="331"/>
    </location>
</feature>
<feature type="mutagenesis site" description="Abolished ability to mediate translation termination. Can recognize stop codons in ribosomal A-site, but is unable to catalyze peptidyl-tRNA hydrolysis." evidence="7">
    <original>G</original>
    <variation>A</variation>
    <location>
        <position position="180"/>
    </location>
</feature>
<feature type="sequence conflict" description="In Ref. 1; CAA27719 and 2; M28042." evidence="9" ref="1 2">
    <original>Q</original>
    <variation>L</variation>
    <location>
        <position position="41"/>
    </location>
</feature>
<accession>P12385</accession>
<accession>D6VQD9</accession>
<protein>
    <recommendedName>
        <fullName>Eukaryotic peptide chain release factor subunit 1</fullName>
        <shortName>Eukaryotic release factor 1</shortName>
        <shortName>eRF1</shortName>
    </recommendedName>
    <alternativeName>
        <fullName>Omnipotent suppressor protein 1</fullName>
    </alternativeName>
</protein>
<name>ERF1_YEAST</name>
<comment type="function">
    <text evidence="6 7 8">Component of the eRF1-eRF3-GTP ternary complex, a ternary complex that mediates translation termination in response to the termination codons (PubMed:20947765, PubMed:34413231, PubMed:7556078). The eRF1-eRF3-GTP complex binds to a stop codon in the ribosomal A-site (PubMed:20947765, PubMed:7556078). SUP45/eRF1 is responsible for stop codon recognition and inducing hydrolysis of peptidyl-tRNA (PubMed:20947765, PubMed:34413231, PubMed:7556078). Following GTP hydrolysis by SUP35/eRF3, SUP35/eRF3 dissociates, permitting SUP45/eRF1 to accommodate fully in the A-site and mediate hydrolysis of peptidyl-tRNA (PubMed:20947765, PubMed:34413231, PubMed:7556078).</text>
</comment>
<comment type="subunit">
    <text evidence="5 8">Component of the eRF1-eRF3-GTP ternary complex, composed of SUP45/eRF1, SUP35/eRF3 and GTP (PubMed:7556078). Interacts with TPA1 (PubMed:16809762).</text>
</comment>
<comment type="interaction">
    <interactant intactId="EBI-6533">
        <id>P12385</id>
    </interactant>
    <interactant intactId="EBI-35146">
        <id>Q03195</id>
        <label>RLI1</label>
    </interactant>
    <organismsDiffer>false</organismsDiffer>
    <experiments>5</experiments>
</comment>
<comment type="interaction">
    <interactant intactId="EBI-6533">
        <id>P12385</id>
    </interactant>
    <interactant intactId="EBI-6540">
        <id>P05453</id>
        <label>SUP35</label>
    </interactant>
    <organismsDiffer>false</organismsDiffer>
    <experiments>5</experiments>
</comment>
<comment type="subcellular location">
    <subcellularLocation>
        <location evidence="1">Cytoplasm</location>
    </subcellularLocation>
</comment>
<comment type="PTM">
    <text evidence="3 4">N5-methylated on Gln-182 by MTQ2.</text>
</comment>
<comment type="miscellaneous">
    <text evidence="2">Present with 13100 molecules/cell in log phase SD medium.</text>
</comment>
<comment type="similarity">
    <text evidence="9">Belongs to the eukaryotic release factor 1 family.</text>
</comment>
<dbReference type="EMBL" id="X04082">
    <property type="protein sequence ID" value="CAA27719.1"/>
    <property type="molecule type" value="Genomic_DNA"/>
</dbReference>
<dbReference type="EMBL" id="M28042">
    <property type="status" value="NOT_ANNOTATED_CDS"/>
    <property type="molecule type" value="Genomic_DNA"/>
</dbReference>
<dbReference type="EMBL" id="Z36012">
    <property type="protein sequence ID" value="CAA85101.1"/>
    <property type="molecule type" value="Genomic_DNA"/>
</dbReference>
<dbReference type="EMBL" id="X73531">
    <property type="protein sequence ID" value="CAA51935.1"/>
    <property type="molecule type" value="Genomic_DNA"/>
</dbReference>
<dbReference type="EMBL" id="BK006936">
    <property type="protein sequence ID" value="DAA07259.1"/>
    <property type="molecule type" value="Genomic_DNA"/>
</dbReference>
<dbReference type="PIR" id="S46014">
    <property type="entry name" value="S46014"/>
</dbReference>
<dbReference type="RefSeq" id="NP_009701.3">
    <property type="nucleotide sequence ID" value="NM_001178491.3"/>
</dbReference>
<dbReference type="PDB" id="4CRM">
    <property type="method" value="EM"/>
    <property type="resolution" value="8.75 A"/>
    <property type="chains" value="X=140-421"/>
</dbReference>
<dbReference type="PDB" id="4CRN">
    <property type="method" value="EM"/>
    <property type="resolution" value="9.10 A"/>
    <property type="chains" value="X=1-437"/>
</dbReference>
<dbReference type="PDBsum" id="4CRM"/>
<dbReference type="PDBsum" id="4CRN"/>
<dbReference type="SMR" id="P12385"/>
<dbReference type="BioGRID" id="32843">
    <property type="interactions" value="178"/>
</dbReference>
<dbReference type="ComplexPortal" id="CPX-435">
    <property type="entry name" value="ERF1-ERF3 translation release factor complex"/>
</dbReference>
<dbReference type="DIP" id="DIP-800N"/>
<dbReference type="FunCoup" id="P12385">
    <property type="interactions" value="1616"/>
</dbReference>
<dbReference type="IntAct" id="P12385">
    <property type="interactions" value="58"/>
</dbReference>
<dbReference type="MINT" id="P12385"/>
<dbReference type="STRING" id="4932.YBR143C"/>
<dbReference type="GlyGen" id="P12385">
    <property type="glycosylation" value="1 site, 1 O-linked glycan (1 site)"/>
</dbReference>
<dbReference type="iPTMnet" id="P12385"/>
<dbReference type="PaxDb" id="4932-YBR143C"/>
<dbReference type="PeptideAtlas" id="P12385"/>
<dbReference type="EnsemblFungi" id="YBR143C_mRNA">
    <property type="protein sequence ID" value="YBR143C"/>
    <property type="gene ID" value="YBR143C"/>
</dbReference>
<dbReference type="GeneID" id="852440"/>
<dbReference type="KEGG" id="sce:YBR143C"/>
<dbReference type="AGR" id="SGD:S000000347"/>
<dbReference type="SGD" id="S000000347">
    <property type="gene designation" value="SUP45"/>
</dbReference>
<dbReference type="VEuPathDB" id="FungiDB:YBR143C"/>
<dbReference type="eggNOG" id="KOG0688">
    <property type="taxonomic scope" value="Eukaryota"/>
</dbReference>
<dbReference type="GeneTree" id="ENSGT00390000009004"/>
<dbReference type="HOGENOM" id="CLU_035759_2_1_1"/>
<dbReference type="InParanoid" id="P12385"/>
<dbReference type="OMA" id="GPGTEKM"/>
<dbReference type="OrthoDB" id="10254527at2759"/>
<dbReference type="BioCyc" id="YEAST:G3O-29097-MONOMER"/>
<dbReference type="Reactome" id="R-SCE-72764">
    <property type="pathway name" value="Eukaryotic Translation Termination"/>
</dbReference>
<dbReference type="Reactome" id="R-SCE-975956">
    <property type="pathway name" value="Nonsense Mediated Decay (NMD) independent of the Exon Junction Complex (EJC)"/>
</dbReference>
<dbReference type="Reactome" id="R-SCE-975957">
    <property type="pathway name" value="Nonsense Mediated Decay (NMD) enhanced by the Exon Junction Complex (EJC)"/>
</dbReference>
<dbReference type="BioGRID-ORCS" id="852440">
    <property type="hits" value="0 hits in 10 CRISPR screens"/>
</dbReference>
<dbReference type="CD-CODE" id="A777E0F8">
    <property type="entry name" value="P-body"/>
</dbReference>
<dbReference type="CD-CODE" id="E03F929F">
    <property type="entry name" value="Stress granule"/>
</dbReference>
<dbReference type="EvolutionaryTrace" id="P12385"/>
<dbReference type="PRO" id="PR:P12385"/>
<dbReference type="Proteomes" id="UP000002311">
    <property type="component" value="Chromosome II"/>
</dbReference>
<dbReference type="RNAct" id="P12385">
    <property type="molecule type" value="protein"/>
</dbReference>
<dbReference type="GO" id="GO:0005737">
    <property type="term" value="C:cytoplasm"/>
    <property type="evidence" value="ECO:0000303"/>
    <property type="project" value="ComplexPortal"/>
</dbReference>
<dbReference type="GO" id="GO:0010494">
    <property type="term" value="C:cytoplasmic stress granule"/>
    <property type="evidence" value="ECO:0000314"/>
    <property type="project" value="SGD"/>
</dbReference>
<dbReference type="GO" id="GO:0005829">
    <property type="term" value="C:cytosol"/>
    <property type="evidence" value="ECO:0000318"/>
    <property type="project" value="GO_Central"/>
</dbReference>
<dbReference type="GO" id="GO:0018444">
    <property type="term" value="C:translation release factor complex"/>
    <property type="evidence" value="ECO:0000314"/>
    <property type="project" value="UniProtKB"/>
</dbReference>
<dbReference type="GO" id="GO:0004045">
    <property type="term" value="F:peptidyl-tRNA hydrolase activity"/>
    <property type="evidence" value="ECO:0000314"/>
    <property type="project" value="UniProtKB"/>
</dbReference>
<dbReference type="GO" id="GO:1990825">
    <property type="term" value="F:sequence-specific mRNA binding"/>
    <property type="evidence" value="ECO:0000318"/>
    <property type="project" value="GO_Central"/>
</dbReference>
<dbReference type="GO" id="GO:0003747">
    <property type="term" value="F:translation release factor activity"/>
    <property type="evidence" value="ECO:0000314"/>
    <property type="project" value="UniProtKB"/>
</dbReference>
<dbReference type="GO" id="GO:0016149">
    <property type="term" value="F:translation release factor activity, codon specific"/>
    <property type="evidence" value="ECO:0000315"/>
    <property type="project" value="SGD"/>
</dbReference>
<dbReference type="GO" id="GO:0002184">
    <property type="term" value="P:cytoplasmic translational termination"/>
    <property type="evidence" value="ECO:0000318"/>
    <property type="project" value="GO_Central"/>
</dbReference>
<dbReference type="GO" id="GO:0006353">
    <property type="term" value="P:DNA-templated transcription termination"/>
    <property type="evidence" value="ECO:0000315"/>
    <property type="project" value="SGD"/>
</dbReference>
<dbReference type="GO" id="GO:0009302">
    <property type="term" value="P:sno(s)RNA transcription"/>
    <property type="evidence" value="ECO:0000315"/>
    <property type="project" value="SGD"/>
</dbReference>
<dbReference type="GO" id="GO:0006415">
    <property type="term" value="P:translational termination"/>
    <property type="evidence" value="ECO:0000314"/>
    <property type="project" value="UniProtKB"/>
</dbReference>
<dbReference type="FunFam" id="3.30.420.60:FF:000001">
    <property type="entry name" value="Eukaryotic peptide chain release factor subunit 1"/>
    <property type="match status" value="1"/>
</dbReference>
<dbReference type="FunFam" id="3.30.960.10:FF:000001">
    <property type="entry name" value="Eukaryotic peptide chain release factor subunit 1"/>
    <property type="match status" value="1"/>
</dbReference>
<dbReference type="FunFam" id="3.30.1330.30:FF:000006">
    <property type="entry name" value="Peptide chain release factor subunit 1"/>
    <property type="match status" value="1"/>
</dbReference>
<dbReference type="Gene3D" id="3.30.1330.30">
    <property type="match status" value="1"/>
</dbReference>
<dbReference type="Gene3D" id="3.30.960.10">
    <property type="entry name" value="eRF1 domain 1"/>
    <property type="match status" value="1"/>
</dbReference>
<dbReference type="Gene3D" id="3.30.420.60">
    <property type="entry name" value="eRF1 domain 2"/>
    <property type="match status" value="1"/>
</dbReference>
<dbReference type="InterPro" id="IPR042226">
    <property type="entry name" value="eFR1_2_sf"/>
</dbReference>
<dbReference type="InterPro" id="IPR005140">
    <property type="entry name" value="eRF1_1_Pelota"/>
</dbReference>
<dbReference type="InterPro" id="IPR024049">
    <property type="entry name" value="eRF1_1_sf"/>
</dbReference>
<dbReference type="InterPro" id="IPR005141">
    <property type="entry name" value="eRF1_2"/>
</dbReference>
<dbReference type="InterPro" id="IPR005142">
    <property type="entry name" value="eRF1_3"/>
</dbReference>
<dbReference type="InterPro" id="IPR004403">
    <property type="entry name" value="Peptide_chain-rel_eRF1/aRF1"/>
</dbReference>
<dbReference type="InterPro" id="IPR029064">
    <property type="entry name" value="Ribosomal_eL30-like_sf"/>
</dbReference>
<dbReference type="NCBIfam" id="TIGR03676">
    <property type="entry name" value="aRF1_eRF1"/>
    <property type="match status" value="1"/>
</dbReference>
<dbReference type="PANTHER" id="PTHR10113">
    <property type="entry name" value="PEPTIDE CHAIN RELEASE FACTOR SUBUNIT 1"/>
    <property type="match status" value="1"/>
</dbReference>
<dbReference type="Pfam" id="PF03463">
    <property type="entry name" value="eRF1_1"/>
    <property type="match status" value="1"/>
</dbReference>
<dbReference type="Pfam" id="PF03464">
    <property type="entry name" value="eRF1_2"/>
    <property type="match status" value="1"/>
</dbReference>
<dbReference type="Pfam" id="PF03465">
    <property type="entry name" value="eRF1_3"/>
    <property type="match status" value="1"/>
</dbReference>
<dbReference type="SMART" id="SM01194">
    <property type="entry name" value="eRF1_1"/>
    <property type="match status" value="1"/>
</dbReference>
<dbReference type="SUPFAM" id="SSF55315">
    <property type="entry name" value="L30e-like"/>
    <property type="match status" value="1"/>
</dbReference>
<dbReference type="SUPFAM" id="SSF55481">
    <property type="entry name" value="N-terminal domain of eukaryotic peptide chain release factor subunit 1, ERF1"/>
    <property type="match status" value="1"/>
</dbReference>
<dbReference type="SUPFAM" id="SSF53137">
    <property type="entry name" value="Translational machinery components"/>
    <property type="match status" value="1"/>
</dbReference>
<keyword id="KW-0002">3D-structure</keyword>
<keyword id="KW-0963">Cytoplasm</keyword>
<keyword id="KW-1017">Isopeptide bond</keyword>
<keyword id="KW-0488">Methylation</keyword>
<keyword id="KW-0597">Phosphoprotein</keyword>
<keyword id="KW-0648">Protein biosynthesis</keyword>
<keyword id="KW-1185">Reference proteome</keyword>
<keyword id="KW-0832">Ubl conjugation</keyword>